<gene>
    <name evidence="1" type="primary">coaE</name>
    <name type="ordered locus">PSHAa0379</name>
</gene>
<feature type="chain" id="PRO_0000243318" description="Dephospho-CoA kinase">
    <location>
        <begin position="1"/>
        <end position="210"/>
    </location>
</feature>
<feature type="domain" description="DPCK" evidence="1">
    <location>
        <begin position="15"/>
        <end position="210"/>
    </location>
</feature>
<feature type="binding site" evidence="1">
    <location>
        <begin position="23"/>
        <end position="28"/>
    </location>
    <ligand>
        <name>ATP</name>
        <dbReference type="ChEBI" id="CHEBI:30616"/>
    </ligand>
</feature>
<accession>Q3IID1</accession>
<sequence>MSEQAVKVTNINNWVLGLTGGIGCGKTAVSNMLEALGICVVDADIIARQVVEPGSEGLKAIVTHFGADILLADGNLNRSALRELVFSNNEHKNWLNTLLHPLIRQQIIIDLNNATSPYVVLVAPLLFENGLDKYCNRTLLIDVPKNVQIERTVKRDNISLEQVNSIIAAQMSREQKQQQADDILNNDRSLTLVKHDLIALHKGYLKLALK</sequence>
<proteinExistence type="inferred from homology"/>
<evidence type="ECO:0000255" key="1">
    <source>
        <dbReference type="HAMAP-Rule" id="MF_00376"/>
    </source>
</evidence>
<comment type="function">
    <text evidence="1">Catalyzes the phosphorylation of the 3'-hydroxyl group of dephosphocoenzyme A to form coenzyme A.</text>
</comment>
<comment type="catalytic activity">
    <reaction evidence="1">
        <text>3'-dephospho-CoA + ATP = ADP + CoA + H(+)</text>
        <dbReference type="Rhea" id="RHEA:18245"/>
        <dbReference type="ChEBI" id="CHEBI:15378"/>
        <dbReference type="ChEBI" id="CHEBI:30616"/>
        <dbReference type="ChEBI" id="CHEBI:57287"/>
        <dbReference type="ChEBI" id="CHEBI:57328"/>
        <dbReference type="ChEBI" id="CHEBI:456216"/>
        <dbReference type="EC" id="2.7.1.24"/>
    </reaction>
</comment>
<comment type="pathway">
    <text evidence="1">Cofactor biosynthesis; coenzyme A biosynthesis; CoA from (R)-pantothenate: step 5/5.</text>
</comment>
<comment type="subcellular location">
    <subcellularLocation>
        <location evidence="1">Cytoplasm</location>
    </subcellularLocation>
</comment>
<comment type="similarity">
    <text evidence="1">Belongs to the CoaE family.</text>
</comment>
<protein>
    <recommendedName>
        <fullName evidence="1">Dephospho-CoA kinase</fullName>
        <ecNumber evidence="1">2.7.1.24</ecNumber>
    </recommendedName>
    <alternativeName>
        <fullName evidence="1">Dephosphocoenzyme A kinase</fullName>
    </alternativeName>
</protein>
<reference key="1">
    <citation type="journal article" date="2005" name="Genome Res.">
        <title>Coping with cold: the genome of the versatile marine Antarctica bacterium Pseudoalteromonas haloplanktis TAC125.</title>
        <authorList>
            <person name="Medigue C."/>
            <person name="Krin E."/>
            <person name="Pascal G."/>
            <person name="Barbe V."/>
            <person name="Bernsel A."/>
            <person name="Bertin P.N."/>
            <person name="Cheung F."/>
            <person name="Cruveiller S."/>
            <person name="D'Amico S."/>
            <person name="Duilio A."/>
            <person name="Fang G."/>
            <person name="Feller G."/>
            <person name="Ho C."/>
            <person name="Mangenot S."/>
            <person name="Marino G."/>
            <person name="Nilsson J."/>
            <person name="Parrilli E."/>
            <person name="Rocha E.P.C."/>
            <person name="Rouy Z."/>
            <person name="Sekowska A."/>
            <person name="Tutino M.L."/>
            <person name="Vallenet D."/>
            <person name="von Heijne G."/>
            <person name="Danchin A."/>
        </authorList>
    </citation>
    <scope>NUCLEOTIDE SEQUENCE [LARGE SCALE GENOMIC DNA]</scope>
    <source>
        <strain>TAC 125</strain>
    </source>
</reference>
<dbReference type="EC" id="2.7.1.24" evidence="1"/>
<dbReference type="EMBL" id="CR954246">
    <property type="protein sequence ID" value="CAI85477.1"/>
    <property type="molecule type" value="Genomic_DNA"/>
</dbReference>
<dbReference type="SMR" id="Q3IID1"/>
<dbReference type="STRING" id="326442.PSHAa0379"/>
<dbReference type="KEGG" id="pha:PSHAa0379"/>
<dbReference type="PATRIC" id="fig|326442.8.peg.363"/>
<dbReference type="eggNOG" id="COG0237">
    <property type="taxonomic scope" value="Bacteria"/>
</dbReference>
<dbReference type="HOGENOM" id="CLU_057180_1_2_6"/>
<dbReference type="BioCyc" id="PHAL326442:PSHA_RS01880-MONOMER"/>
<dbReference type="UniPathway" id="UPA00241">
    <property type="reaction ID" value="UER00356"/>
</dbReference>
<dbReference type="Proteomes" id="UP000006843">
    <property type="component" value="Chromosome I"/>
</dbReference>
<dbReference type="GO" id="GO:0005737">
    <property type="term" value="C:cytoplasm"/>
    <property type="evidence" value="ECO:0007669"/>
    <property type="project" value="UniProtKB-SubCell"/>
</dbReference>
<dbReference type="GO" id="GO:0005524">
    <property type="term" value="F:ATP binding"/>
    <property type="evidence" value="ECO:0007669"/>
    <property type="project" value="UniProtKB-UniRule"/>
</dbReference>
<dbReference type="GO" id="GO:0004140">
    <property type="term" value="F:dephospho-CoA kinase activity"/>
    <property type="evidence" value="ECO:0007669"/>
    <property type="project" value="UniProtKB-UniRule"/>
</dbReference>
<dbReference type="GO" id="GO:0015937">
    <property type="term" value="P:coenzyme A biosynthetic process"/>
    <property type="evidence" value="ECO:0007669"/>
    <property type="project" value="UniProtKB-UniRule"/>
</dbReference>
<dbReference type="CDD" id="cd02022">
    <property type="entry name" value="DPCK"/>
    <property type="match status" value="1"/>
</dbReference>
<dbReference type="Gene3D" id="3.40.50.300">
    <property type="entry name" value="P-loop containing nucleotide triphosphate hydrolases"/>
    <property type="match status" value="1"/>
</dbReference>
<dbReference type="HAMAP" id="MF_00376">
    <property type="entry name" value="Dephospho_CoA_kinase"/>
    <property type="match status" value="1"/>
</dbReference>
<dbReference type="InterPro" id="IPR001977">
    <property type="entry name" value="Depp_CoAkinase"/>
</dbReference>
<dbReference type="InterPro" id="IPR027417">
    <property type="entry name" value="P-loop_NTPase"/>
</dbReference>
<dbReference type="NCBIfam" id="TIGR00152">
    <property type="entry name" value="dephospho-CoA kinase"/>
    <property type="match status" value="1"/>
</dbReference>
<dbReference type="PANTHER" id="PTHR10695:SF46">
    <property type="entry name" value="BIFUNCTIONAL COENZYME A SYNTHASE-RELATED"/>
    <property type="match status" value="1"/>
</dbReference>
<dbReference type="PANTHER" id="PTHR10695">
    <property type="entry name" value="DEPHOSPHO-COA KINASE-RELATED"/>
    <property type="match status" value="1"/>
</dbReference>
<dbReference type="Pfam" id="PF01121">
    <property type="entry name" value="CoaE"/>
    <property type="match status" value="1"/>
</dbReference>
<dbReference type="SUPFAM" id="SSF52540">
    <property type="entry name" value="P-loop containing nucleoside triphosphate hydrolases"/>
    <property type="match status" value="1"/>
</dbReference>
<dbReference type="PROSITE" id="PS51219">
    <property type="entry name" value="DPCK"/>
    <property type="match status" value="1"/>
</dbReference>
<keyword id="KW-0067">ATP-binding</keyword>
<keyword id="KW-0173">Coenzyme A biosynthesis</keyword>
<keyword id="KW-0963">Cytoplasm</keyword>
<keyword id="KW-0418">Kinase</keyword>
<keyword id="KW-0547">Nucleotide-binding</keyword>
<keyword id="KW-1185">Reference proteome</keyword>
<keyword id="KW-0808">Transferase</keyword>
<name>COAE_PSET1</name>
<organism>
    <name type="scientific">Pseudoalteromonas translucida (strain TAC 125)</name>
    <dbReference type="NCBI Taxonomy" id="326442"/>
    <lineage>
        <taxon>Bacteria</taxon>
        <taxon>Pseudomonadati</taxon>
        <taxon>Pseudomonadota</taxon>
        <taxon>Gammaproteobacteria</taxon>
        <taxon>Alteromonadales</taxon>
        <taxon>Pseudoalteromonadaceae</taxon>
        <taxon>Pseudoalteromonas</taxon>
    </lineage>
</organism>